<organism>
    <name type="scientific">Oenococcus oeni (strain ATCC BAA-331 / PSU-1)</name>
    <dbReference type="NCBI Taxonomy" id="203123"/>
    <lineage>
        <taxon>Bacteria</taxon>
        <taxon>Bacillati</taxon>
        <taxon>Bacillota</taxon>
        <taxon>Bacilli</taxon>
        <taxon>Lactobacillales</taxon>
        <taxon>Lactobacillaceae</taxon>
        <taxon>Oenococcus</taxon>
    </lineage>
</organism>
<comment type="function">
    <text evidence="1">Required for the formation of a threonylcarbamoyl group on adenosine at position 37 (t(6)A37) in tRNAs that read codons beginning with adenine. Is involved in the transfer of the threonylcarbamoyl moiety of threonylcarbamoyl-AMP (TC-AMP) to the N6 group of A37, together with TsaE and TsaB. TsaD likely plays a direct catalytic role in this reaction.</text>
</comment>
<comment type="catalytic activity">
    <reaction evidence="1">
        <text>L-threonylcarbamoyladenylate + adenosine(37) in tRNA = N(6)-L-threonylcarbamoyladenosine(37) in tRNA + AMP + H(+)</text>
        <dbReference type="Rhea" id="RHEA:37059"/>
        <dbReference type="Rhea" id="RHEA-COMP:10162"/>
        <dbReference type="Rhea" id="RHEA-COMP:10163"/>
        <dbReference type="ChEBI" id="CHEBI:15378"/>
        <dbReference type="ChEBI" id="CHEBI:73682"/>
        <dbReference type="ChEBI" id="CHEBI:74411"/>
        <dbReference type="ChEBI" id="CHEBI:74418"/>
        <dbReference type="ChEBI" id="CHEBI:456215"/>
        <dbReference type="EC" id="2.3.1.234"/>
    </reaction>
</comment>
<comment type="cofactor">
    <cofactor evidence="1">
        <name>Fe(2+)</name>
        <dbReference type="ChEBI" id="CHEBI:29033"/>
    </cofactor>
    <text evidence="1">Binds 1 Fe(2+) ion per subunit.</text>
</comment>
<comment type="subcellular location">
    <subcellularLocation>
        <location evidence="1">Cytoplasm</location>
    </subcellularLocation>
</comment>
<comment type="similarity">
    <text evidence="1">Belongs to the KAE1 / TsaD family.</text>
</comment>
<name>TSAD_OENOB</name>
<evidence type="ECO:0000255" key="1">
    <source>
        <dbReference type="HAMAP-Rule" id="MF_01445"/>
    </source>
</evidence>
<protein>
    <recommendedName>
        <fullName evidence="1">tRNA N6-adenosine threonylcarbamoyltransferase</fullName>
        <ecNumber evidence="1">2.3.1.234</ecNumber>
    </recommendedName>
    <alternativeName>
        <fullName evidence="1">N6-L-threonylcarbamoyladenine synthase</fullName>
        <shortName evidence="1">t(6)A synthase</shortName>
    </alternativeName>
    <alternativeName>
        <fullName evidence="1">t(6)A37 threonylcarbamoyladenosine biosynthesis protein TsaD</fullName>
    </alternativeName>
    <alternativeName>
        <fullName evidence="1">tRNA threonylcarbamoyladenosine biosynthesis protein TsaD</fullName>
    </alternativeName>
</protein>
<keyword id="KW-0012">Acyltransferase</keyword>
<keyword id="KW-0963">Cytoplasm</keyword>
<keyword id="KW-0408">Iron</keyword>
<keyword id="KW-0479">Metal-binding</keyword>
<keyword id="KW-1185">Reference proteome</keyword>
<keyword id="KW-0808">Transferase</keyword>
<keyword id="KW-0819">tRNA processing</keyword>
<sequence>MNEKTDDIILAFESSADETSAAVVKNGNTILSNVVATQIASHQRFGGIVPEVASRHHLEWINRVTEEALTKAGINDPERQLSAVAATYGPGLVGSLLVGLMAGKTFAMVHHLPFIAVNHLAGHISAANFVKATVYPALAIMVSGGHTELLWMEKENTFQIIGTTLDDAAGEAFDKVGRILGLKYPAGKEIQEMAGHGKAVIKFPIAHTEDDFDFSFSGLKSSVLNYVHHHEQVSEEFNRNDVAASFQKAVVEAITEKSRLAIEKFQPKELLLGGGVAANLALRTAFENLSKEYKIELTEAPIKLSGDNAAMIGAAAYLNYKQRLFAPLDLNVDPSLNFARM</sequence>
<proteinExistence type="inferred from homology"/>
<gene>
    <name evidence="1" type="primary">tsaD</name>
    <name type="synonym">gcp</name>
    <name type="ordered locus">OEOE_1399</name>
</gene>
<dbReference type="EC" id="2.3.1.234" evidence="1"/>
<dbReference type="EMBL" id="CP000411">
    <property type="protein sequence ID" value="ABJ57261.1"/>
    <property type="molecule type" value="Genomic_DNA"/>
</dbReference>
<dbReference type="RefSeq" id="WP_011677697.1">
    <property type="nucleotide sequence ID" value="NC_008528.1"/>
</dbReference>
<dbReference type="SMR" id="Q04E61"/>
<dbReference type="STRING" id="203123.OEOE_1399"/>
<dbReference type="KEGG" id="ooe:OEOE_1399"/>
<dbReference type="PATRIC" id="fig|203123.7.peg.1414"/>
<dbReference type="eggNOG" id="COG0533">
    <property type="taxonomic scope" value="Bacteria"/>
</dbReference>
<dbReference type="HOGENOM" id="CLU_023208_0_2_9"/>
<dbReference type="Proteomes" id="UP000000774">
    <property type="component" value="Chromosome"/>
</dbReference>
<dbReference type="GO" id="GO:0005737">
    <property type="term" value="C:cytoplasm"/>
    <property type="evidence" value="ECO:0007669"/>
    <property type="project" value="UniProtKB-SubCell"/>
</dbReference>
<dbReference type="GO" id="GO:0005506">
    <property type="term" value="F:iron ion binding"/>
    <property type="evidence" value="ECO:0007669"/>
    <property type="project" value="UniProtKB-UniRule"/>
</dbReference>
<dbReference type="GO" id="GO:0061711">
    <property type="term" value="F:N(6)-L-threonylcarbamoyladenine synthase activity"/>
    <property type="evidence" value="ECO:0007669"/>
    <property type="project" value="UniProtKB-EC"/>
</dbReference>
<dbReference type="GO" id="GO:0002949">
    <property type="term" value="P:tRNA threonylcarbamoyladenosine modification"/>
    <property type="evidence" value="ECO:0007669"/>
    <property type="project" value="UniProtKB-UniRule"/>
</dbReference>
<dbReference type="CDD" id="cd24133">
    <property type="entry name" value="ASKHA_NBD_TsaD_bac"/>
    <property type="match status" value="1"/>
</dbReference>
<dbReference type="FunFam" id="3.30.420.40:FF:000012">
    <property type="entry name" value="tRNA N6-adenosine threonylcarbamoyltransferase"/>
    <property type="match status" value="1"/>
</dbReference>
<dbReference type="FunFam" id="3.30.420.40:FF:000040">
    <property type="entry name" value="tRNA N6-adenosine threonylcarbamoyltransferase"/>
    <property type="match status" value="1"/>
</dbReference>
<dbReference type="Gene3D" id="3.30.420.40">
    <property type="match status" value="2"/>
</dbReference>
<dbReference type="HAMAP" id="MF_01445">
    <property type="entry name" value="TsaD"/>
    <property type="match status" value="1"/>
</dbReference>
<dbReference type="InterPro" id="IPR043129">
    <property type="entry name" value="ATPase_NBD"/>
</dbReference>
<dbReference type="InterPro" id="IPR000905">
    <property type="entry name" value="Gcp-like_dom"/>
</dbReference>
<dbReference type="InterPro" id="IPR017861">
    <property type="entry name" value="KAE1/TsaD"/>
</dbReference>
<dbReference type="InterPro" id="IPR017860">
    <property type="entry name" value="Peptidase_M22_CS"/>
</dbReference>
<dbReference type="InterPro" id="IPR022450">
    <property type="entry name" value="TsaD"/>
</dbReference>
<dbReference type="NCBIfam" id="TIGR00329">
    <property type="entry name" value="gcp_kae1"/>
    <property type="match status" value="1"/>
</dbReference>
<dbReference type="NCBIfam" id="TIGR03723">
    <property type="entry name" value="T6A_TsaD_YgjD"/>
    <property type="match status" value="1"/>
</dbReference>
<dbReference type="PANTHER" id="PTHR11735">
    <property type="entry name" value="TRNA N6-ADENOSINE THREONYLCARBAMOYLTRANSFERASE"/>
    <property type="match status" value="1"/>
</dbReference>
<dbReference type="PANTHER" id="PTHR11735:SF6">
    <property type="entry name" value="TRNA N6-ADENOSINE THREONYLCARBAMOYLTRANSFERASE, MITOCHONDRIAL"/>
    <property type="match status" value="1"/>
</dbReference>
<dbReference type="Pfam" id="PF00814">
    <property type="entry name" value="TsaD"/>
    <property type="match status" value="1"/>
</dbReference>
<dbReference type="PRINTS" id="PR00789">
    <property type="entry name" value="OSIALOPTASE"/>
</dbReference>
<dbReference type="SUPFAM" id="SSF53067">
    <property type="entry name" value="Actin-like ATPase domain"/>
    <property type="match status" value="2"/>
</dbReference>
<dbReference type="PROSITE" id="PS01016">
    <property type="entry name" value="GLYCOPROTEASE"/>
    <property type="match status" value="1"/>
</dbReference>
<accession>Q04E61</accession>
<reference key="1">
    <citation type="journal article" date="2006" name="Proc. Natl. Acad. Sci. U.S.A.">
        <title>Comparative genomics of the lactic acid bacteria.</title>
        <authorList>
            <person name="Makarova K.S."/>
            <person name="Slesarev A."/>
            <person name="Wolf Y.I."/>
            <person name="Sorokin A."/>
            <person name="Mirkin B."/>
            <person name="Koonin E.V."/>
            <person name="Pavlov A."/>
            <person name="Pavlova N."/>
            <person name="Karamychev V."/>
            <person name="Polouchine N."/>
            <person name="Shakhova V."/>
            <person name="Grigoriev I."/>
            <person name="Lou Y."/>
            <person name="Rohksar D."/>
            <person name="Lucas S."/>
            <person name="Huang K."/>
            <person name="Goodstein D.M."/>
            <person name="Hawkins T."/>
            <person name="Plengvidhya V."/>
            <person name="Welker D."/>
            <person name="Hughes J."/>
            <person name="Goh Y."/>
            <person name="Benson A."/>
            <person name="Baldwin K."/>
            <person name="Lee J.-H."/>
            <person name="Diaz-Muniz I."/>
            <person name="Dosti B."/>
            <person name="Smeianov V."/>
            <person name="Wechter W."/>
            <person name="Barabote R."/>
            <person name="Lorca G."/>
            <person name="Altermann E."/>
            <person name="Barrangou R."/>
            <person name="Ganesan B."/>
            <person name="Xie Y."/>
            <person name="Rawsthorne H."/>
            <person name="Tamir D."/>
            <person name="Parker C."/>
            <person name="Breidt F."/>
            <person name="Broadbent J.R."/>
            <person name="Hutkins R."/>
            <person name="O'Sullivan D."/>
            <person name="Steele J."/>
            <person name="Unlu G."/>
            <person name="Saier M.H. Jr."/>
            <person name="Klaenhammer T."/>
            <person name="Richardson P."/>
            <person name="Kozyavkin S."/>
            <person name="Weimer B.C."/>
            <person name="Mills D.A."/>
        </authorList>
    </citation>
    <scope>NUCLEOTIDE SEQUENCE [LARGE SCALE GENOMIC DNA]</scope>
    <source>
        <strain>ATCC BAA-331 / PSU-1</strain>
    </source>
</reference>
<feature type="chain" id="PRO_0000303463" description="tRNA N6-adenosine threonylcarbamoyltransferase">
    <location>
        <begin position="1"/>
        <end position="341"/>
    </location>
</feature>
<feature type="binding site" evidence="1">
    <location>
        <position position="119"/>
    </location>
    <ligand>
        <name>Fe cation</name>
        <dbReference type="ChEBI" id="CHEBI:24875"/>
    </ligand>
</feature>
<feature type="binding site" evidence="1">
    <location>
        <position position="123"/>
    </location>
    <ligand>
        <name>Fe cation</name>
        <dbReference type="ChEBI" id="CHEBI:24875"/>
    </ligand>
</feature>
<feature type="binding site" evidence="1">
    <location>
        <begin position="141"/>
        <end position="145"/>
    </location>
    <ligand>
        <name>substrate</name>
    </ligand>
</feature>
<feature type="binding site" evidence="1">
    <location>
        <position position="174"/>
    </location>
    <ligand>
        <name>substrate</name>
    </ligand>
</feature>
<feature type="binding site" evidence="1">
    <location>
        <position position="187"/>
    </location>
    <ligand>
        <name>substrate</name>
    </ligand>
</feature>
<feature type="binding site" evidence="1">
    <location>
        <position position="279"/>
    </location>
    <ligand>
        <name>substrate</name>
    </ligand>
</feature>
<feature type="binding site" evidence="1">
    <location>
        <position position="307"/>
    </location>
    <ligand>
        <name>Fe cation</name>
        <dbReference type="ChEBI" id="CHEBI:24875"/>
    </ligand>
</feature>